<accession>A0A396ISC0</accession>
<accession>A0A072V956</accession>
<accession>Q6UZ79</accession>
<sequence>MESPQAKKSGLNLPAGMSTITSLRLETLSTPPSSASPRAISNLSSTPSPSKSSKCSDRFIPCRSSSRLHTFGLIDNQSPVKEGSNEAYNRLLKSELFGPDFASPSSSPAGCGVGSPLVSPSKNMLRFKTESCGPSSPFSPSIFGRNDGFCNEGFTPPKPPRKVPKTPHKVLDAPSLQDDFYLNLVDWSSQNTLAVGLGTCVYLWSASNSKVTKLCDLGPYDGVCSVQWTKEGSFISIGTNGGQVQIWDGTKCKKVRTMGGHQTRTGVLAWNSRILASGSRDRNILQHDMRVPSDFIGKLVGHKSEVCGLKWSCDDRELASGGNDNQLLVWNQHSQQPTLRLTEHTAAVKAIAWSPHQSNLLVSGGGTADRCIRFWNTTNGHQLNSVDTGSQVCNLAWSKNVNELVSTHGYSQNQIMVWKYPSLAKVATLTGHSMRVLYLAMSPDGQTIVTGAGDETLRFWNVFPSMKTPAPVKDTGLWSLGRTQIR</sequence>
<protein>
    <recommendedName>
        <fullName evidence="6">B-type cell cycle switch protein ccs52B</fullName>
        <shortName evidence="6">MtCcs52B</shortName>
    </recommendedName>
</protein>
<reference key="1">
    <citation type="journal article" date="2011" name="Nature">
        <title>The Medicago genome provides insight into the evolution of rhizobial symbioses.</title>
        <authorList>
            <person name="Young N.D."/>
            <person name="Debelle F."/>
            <person name="Oldroyd G.E.D."/>
            <person name="Geurts R."/>
            <person name="Cannon S.B."/>
            <person name="Udvardi M.K."/>
            <person name="Benedito V.A."/>
            <person name="Mayer K.F.X."/>
            <person name="Gouzy J."/>
            <person name="Schoof H."/>
            <person name="Van de Peer Y."/>
            <person name="Proost S."/>
            <person name="Cook D.R."/>
            <person name="Meyers B.C."/>
            <person name="Spannagl M."/>
            <person name="Cheung F."/>
            <person name="De Mita S."/>
            <person name="Krishnakumar V."/>
            <person name="Gundlach H."/>
            <person name="Zhou S."/>
            <person name="Mudge J."/>
            <person name="Bharti A.K."/>
            <person name="Murray J.D."/>
            <person name="Naoumkina M.A."/>
            <person name="Rosen B."/>
            <person name="Silverstein K.A.T."/>
            <person name="Tang H."/>
            <person name="Rombauts S."/>
            <person name="Zhao P.X."/>
            <person name="Zhou P."/>
            <person name="Barbe V."/>
            <person name="Bardou P."/>
            <person name="Bechner M."/>
            <person name="Bellec A."/>
            <person name="Berger A."/>
            <person name="Berges H."/>
            <person name="Bidwell S."/>
            <person name="Bisseling T."/>
            <person name="Choisne N."/>
            <person name="Couloux A."/>
            <person name="Denny R."/>
            <person name="Deshpande S."/>
            <person name="Dai X."/>
            <person name="Doyle J.J."/>
            <person name="Dudez A.-M."/>
            <person name="Farmer A.D."/>
            <person name="Fouteau S."/>
            <person name="Franken C."/>
            <person name="Gibelin C."/>
            <person name="Gish J."/>
            <person name="Goldstein S."/>
            <person name="Gonzalez A.J."/>
            <person name="Green P.J."/>
            <person name="Hallab A."/>
            <person name="Hartog M."/>
            <person name="Hua A."/>
            <person name="Humphray S.J."/>
            <person name="Jeong D.-H."/>
            <person name="Jing Y."/>
            <person name="Jocker A."/>
            <person name="Kenton S.M."/>
            <person name="Kim D.-J."/>
            <person name="Klee K."/>
            <person name="Lai H."/>
            <person name="Lang C."/>
            <person name="Lin S."/>
            <person name="Macmil S.L."/>
            <person name="Magdelenat G."/>
            <person name="Matthews L."/>
            <person name="McCorrison J."/>
            <person name="Monaghan E.L."/>
            <person name="Mun J.-H."/>
            <person name="Najar F.Z."/>
            <person name="Nicholson C."/>
            <person name="Noirot C."/>
            <person name="O'Bleness M."/>
            <person name="Paule C.R."/>
            <person name="Poulain J."/>
            <person name="Prion F."/>
            <person name="Qin B."/>
            <person name="Qu C."/>
            <person name="Retzel E.F."/>
            <person name="Riddle C."/>
            <person name="Sallet E."/>
            <person name="Samain S."/>
            <person name="Samson N."/>
            <person name="Sanders I."/>
            <person name="Saurat O."/>
            <person name="Scarpelli C."/>
            <person name="Schiex T."/>
            <person name="Segurens B."/>
            <person name="Severin A.J."/>
            <person name="Sherrier D.J."/>
            <person name="Shi R."/>
            <person name="Sims S."/>
            <person name="Singer S.R."/>
            <person name="Sinharoy S."/>
            <person name="Sterck L."/>
            <person name="Viollet A."/>
            <person name="Wang B.-B."/>
            <person name="Wang K."/>
            <person name="Wang M."/>
            <person name="Wang X."/>
            <person name="Warfsmann J."/>
            <person name="Weissenbach J."/>
            <person name="White D.D."/>
            <person name="White J.D."/>
            <person name="Wiley G.B."/>
            <person name="Wincker P."/>
            <person name="Xing Y."/>
            <person name="Yang L."/>
            <person name="Yao Z."/>
            <person name="Ying F."/>
            <person name="Zhai J."/>
            <person name="Zhou L."/>
            <person name="Zuber A."/>
            <person name="Denarie J."/>
            <person name="Dixon R.A."/>
            <person name="May G.D."/>
            <person name="Schwartz D.C."/>
            <person name="Rogers J."/>
            <person name="Quetier F."/>
            <person name="Town C.D."/>
            <person name="Roe B.A."/>
        </authorList>
    </citation>
    <scope>NUCLEOTIDE SEQUENCE [LARGE SCALE GENOMIC DNA]</scope>
    <source>
        <strain>cv. Jemalong A17</strain>
    </source>
</reference>
<reference key="2">
    <citation type="journal article" date="2014" name="BMC Genomics">
        <title>An improved genome release (version Mt4.0) for the model legume Medicago truncatula.</title>
        <authorList>
            <person name="Tang H."/>
            <person name="Krishnakumar V."/>
            <person name="Bidwell S."/>
            <person name="Rosen B."/>
            <person name="Chan A."/>
            <person name="Zhou S."/>
            <person name="Gentzbittel L."/>
            <person name="Childs K.L."/>
            <person name="Yandell M."/>
            <person name="Gundlach H."/>
            <person name="Mayer K.F."/>
            <person name="Schwartz D.C."/>
            <person name="Town C.D."/>
        </authorList>
    </citation>
    <scope>GENOME REANNOTATION</scope>
    <source>
        <strain>cv. Jemalong A17</strain>
    </source>
</reference>
<reference key="3">
    <citation type="journal article" date="2018" name="Nat. Plants">
        <title>Whole-genome landscape of Medicago truncatula symbiotic genes.</title>
        <authorList>
            <person name="Pecrix Y."/>
            <person name="Staton S.E."/>
            <person name="Sallet E."/>
            <person name="Lelandais-Briere C."/>
            <person name="Moreau S."/>
            <person name="Carrere S."/>
            <person name="Blein T."/>
            <person name="Jardinaud M.F."/>
            <person name="Latrasse D."/>
            <person name="Zouine M."/>
            <person name="Zahm M."/>
            <person name="Kreplak J."/>
            <person name="Mayjonade B."/>
            <person name="Satge C."/>
            <person name="Perez M."/>
            <person name="Cauet S."/>
            <person name="Marande W."/>
            <person name="Chantry-Darmon C."/>
            <person name="Lopez-Roques C."/>
            <person name="Bouchez O."/>
            <person name="Berard A."/>
            <person name="Debelle F."/>
            <person name="Munos S."/>
            <person name="Bendahmane A."/>
            <person name="Berges H."/>
            <person name="Niebel A."/>
            <person name="Buitink J."/>
            <person name="Frugier F."/>
            <person name="Benhamed M."/>
            <person name="Crespi M."/>
            <person name="Gouzy J."/>
            <person name="Gamas P."/>
        </authorList>
    </citation>
    <scope>NUCLEOTIDE SEQUENCE [LARGE SCALE GENOMIC DNA]</scope>
    <source>
        <strain>cv. Jemalong A17</strain>
    </source>
</reference>
<reference key="4">
    <citation type="journal article" date="2004" name="Plant Cell">
        <title>Two classes of the CDh1-type activators of the anaphase-promoting complex in plants: novel functional domains and distinct regulation.</title>
        <authorList>
            <person name="Tarayre S."/>
            <person name="Vinardell J.M."/>
            <person name="Cebolla A."/>
            <person name="Kondorosi A."/>
            <person name="Kondorosi E."/>
        </authorList>
    </citation>
    <scope>NUCLEOTIDE SEQUENCE [MRNA] OF 2-486</scope>
    <scope>TISSUE SPECIFICITY</scope>
    <scope>INDUCTION</scope>
    <scope>GENE FAMILY</scope>
    <scope>NOMENCLATURE</scope>
    <source>
        <tissue>Root</tissue>
    </source>
</reference>
<reference key="5">
    <citation type="journal article" date="2015" name="Int. Rev. Cell Mol. Biol.">
        <title>Leguminous plants: inventors of root nodules to accommodate symbiotic bacteria.</title>
        <authorList>
            <person name="Suzaki T."/>
            <person name="Yoro E."/>
            <person name="Kawaguchi M."/>
        </authorList>
    </citation>
    <scope>REVIEW ON NODULATION</scope>
</reference>
<reference key="6">
    <citation type="journal article" date="2020" name="Plant Cell">
        <title>Celebrating 20 years of genetic discoveries in legume nodulation and symbiotic nitrogen fixation.</title>
        <authorList>
            <person name="Roy S."/>
            <person name="Liu W."/>
            <person name="Nandety R.S."/>
            <person name="Crook A."/>
            <person name="Mysore K.S."/>
            <person name="Pislariu C.I."/>
            <person name="Frugoli J."/>
            <person name="Dickstein R."/>
            <person name="Udvardi M.K."/>
        </authorList>
    </citation>
    <scope>REVIEW ON NODULATION</scope>
</reference>
<name>CS52B_MEDTR</name>
<comment type="function">
    <text evidence="1">Component of the anaphase promoting complex/cyclosome (APC/C), a cell cycle-regulated E3 ubiquitin-protein ligase complex that controls progression through mitosis and the G1 phase of the cell cycle.</text>
</comment>
<comment type="pathway">
    <text evidence="1">Protein modification; protein ubiquitination.</text>
</comment>
<comment type="tissue specificity">
    <text evidence="5">Mostly expressed in shoot apices and, to a lower extent, in roots, especially in root tips, and in hypocotyls (PubMed:14742878). Expressed in nodulation-competent root zone but not in the nodules (PubMed:14742878).</text>
</comment>
<comment type="induction">
    <text evidence="5">Expression restricted to late G2-phase and M-phase during the cell cycle.</text>
</comment>
<comment type="domain">
    <text evidence="2">Both CSM and C-box motifs are required for binding to the anaphase promoting complex/cyclosome (APC/C).</text>
</comment>
<comment type="similarity">
    <text evidence="1">Belongs to the WD repeat CDC20/Fizzy family.</text>
</comment>
<comment type="sequence caution" evidence="7">
    <conflict type="erroneous initiation">
        <sequence resource="EMBL-CDS" id="AAQ72359"/>
    </conflict>
    <text>Truncated N-terminus.</text>
</comment>
<comment type="sequence caution" evidence="7">
    <conflict type="erroneous gene model prediction">
        <sequence resource="EMBL-CDS" id="KEH34720"/>
    </conflict>
</comment>
<keyword id="KW-0131">Cell cycle</keyword>
<keyword id="KW-0132">Cell division</keyword>
<keyword id="KW-0498">Mitosis</keyword>
<keyword id="KW-1185">Reference proteome</keyword>
<keyword id="KW-0677">Repeat</keyword>
<keyword id="KW-0853">WD repeat</keyword>
<gene>
    <name evidence="6" type="primary">CCS52B</name>
    <name evidence="9" type="ordered locus">MtrunA17_Chr3g0111961</name>
    <name evidence="8" type="ordered locus">MTR_3g067940</name>
</gene>
<evidence type="ECO:0000250" key="1">
    <source>
        <dbReference type="UniProtKB" id="Q54KM3"/>
    </source>
</evidence>
<evidence type="ECO:0000250" key="2">
    <source>
        <dbReference type="UniProtKB" id="Q9M7I2"/>
    </source>
</evidence>
<evidence type="ECO:0000255" key="3"/>
<evidence type="ECO:0000256" key="4">
    <source>
        <dbReference type="SAM" id="MobiDB-lite"/>
    </source>
</evidence>
<evidence type="ECO:0000269" key="5">
    <source>
    </source>
</evidence>
<evidence type="ECO:0000303" key="6">
    <source>
    </source>
</evidence>
<evidence type="ECO:0000305" key="7"/>
<evidence type="ECO:0000312" key="8">
    <source>
        <dbReference type="EMBL" id="KEH34720.1"/>
    </source>
</evidence>
<evidence type="ECO:0000312" key="9">
    <source>
        <dbReference type="EMBL" id="RHN68260.1"/>
    </source>
</evidence>
<feature type="chain" id="PRO_0000457863" description="B-type cell cycle switch protein ccs52B">
    <location>
        <begin position="1"/>
        <end position="486"/>
    </location>
</feature>
<feature type="repeat" description="WD 1" evidence="3">
    <location>
        <begin position="177"/>
        <end position="214"/>
    </location>
</feature>
<feature type="repeat" description="WD 2" evidence="3">
    <location>
        <begin position="218"/>
        <end position="257"/>
    </location>
</feature>
<feature type="repeat" description="WD 3" evidence="3">
    <location>
        <begin position="260"/>
        <end position="297"/>
    </location>
</feature>
<feature type="repeat" description="WD 4" evidence="3">
    <location>
        <begin position="301"/>
        <end position="340"/>
    </location>
</feature>
<feature type="repeat" description="WD 5" evidence="3">
    <location>
        <begin position="343"/>
        <end position="385"/>
    </location>
</feature>
<feature type="repeat" description="WD 6" evidence="3">
    <location>
        <begin position="387"/>
        <end position="428"/>
    </location>
</feature>
<feature type="repeat" description="WD 7" evidence="3">
    <location>
        <begin position="431"/>
        <end position="470"/>
    </location>
</feature>
<feature type="region of interest" description="Disordered" evidence="4">
    <location>
        <begin position="27"/>
        <end position="57"/>
    </location>
</feature>
<feature type="short sequence motif" description="PEST motif" evidence="6">
    <location>
        <begin position="24"/>
        <end position="36"/>
    </location>
</feature>
<feature type="short sequence motif" description="C-box" evidence="6">
    <location>
        <begin position="57"/>
        <end position="63"/>
    </location>
</feature>
<feature type="short sequence motif" description="CSM motif" evidence="6">
    <location>
        <begin position="87"/>
        <end position="98"/>
    </location>
</feature>
<feature type="compositionally biased region" description="Polar residues" evidence="4">
    <location>
        <begin position="27"/>
        <end position="36"/>
    </location>
</feature>
<feature type="compositionally biased region" description="Low complexity" evidence="4">
    <location>
        <begin position="41"/>
        <end position="53"/>
    </location>
</feature>
<feature type="sequence conflict" description="In Ref. 4; AAQ72359." evidence="7" ref="4">
    <original>R</original>
    <variation>M</variation>
    <location>
        <position position="126"/>
    </location>
</feature>
<feature type="sequence conflict" description="In Ref. 4; AAQ72359." evidence="7" ref="4">
    <original>S</original>
    <variation>SL</variation>
    <location>
        <position position="139"/>
    </location>
</feature>
<feature type="sequence conflict" description="In Ref. 4; AAQ72359." evidence="7" ref="4">
    <original>F</original>
    <variation>S</variation>
    <location>
        <position position="154"/>
    </location>
</feature>
<feature type="sequence conflict" description="In Ref. 4; AAQ72359." evidence="7" ref="4">
    <original>A</original>
    <variation>P</variation>
    <location>
        <position position="368"/>
    </location>
</feature>
<organism>
    <name type="scientific">Medicago truncatula</name>
    <name type="common">Barrel medic</name>
    <name type="synonym">Medicago tribuloides</name>
    <dbReference type="NCBI Taxonomy" id="3880"/>
    <lineage>
        <taxon>Eukaryota</taxon>
        <taxon>Viridiplantae</taxon>
        <taxon>Streptophyta</taxon>
        <taxon>Embryophyta</taxon>
        <taxon>Tracheophyta</taxon>
        <taxon>Spermatophyta</taxon>
        <taxon>Magnoliopsida</taxon>
        <taxon>eudicotyledons</taxon>
        <taxon>Gunneridae</taxon>
        <taxon>Pentapetalae</taxon>
        <taxon>rosids</taxon>
        <taxon>fabids</taxon>
        <taxon>Fabales</taxon>
        <taxon>Fabaceae</taxon>
        <taxon>Papilionoideae</taxon>
        <taxon>50 kb inversion clade</taxon>
        <taxon>NPAAA clade</taxon>
        <taxon>Hologalegina</taxon>
        <taxon>IRL clade</taxon>
        <taxon>Trifolieae</taxon>
        <taxon>Medicago</taxon>
    </lineage>
</organism>
<proteinExistence type="evidence at transcript level"/>
<dbReference type="EMBL" id="CM001219">
    <property type="protein sequence ID" value="KEH34720.1"/>
    <property type="status" value="ALT_SEQ"/>
    <property type="molecule type" value="Genomic_DNA"/>
</dbReference>
<dbReference type="EMBL" id="PSQE01000003">
    <property type="protein sequence ID" value="RHN68260.1"/>
    <property type="molecule type" value="Genomic_DNA"/>
</dbReference>
<dbReference type="EMBL" id="AY357299">
    <property type="protein sequence ID" value="AAQ72359.1"/>
    <property type="status" value="ALT_INIT"/>
    <property type="molecule type" value="mRNA"/>
</dbReference>
<dbReference type="RefSeq" id="XP_013460686.1">
    <property type="nucleotide sequence ID" value="XM_013605232.1"/>
</dbReference>
<dbReference type="SMR" id="A0A396ISC0"/>
<dbReference type="ELM" id="Q6UZ79"/>
<dbReference type="STRING" id="3880.A0A072V956"/>
<dbReference type="EnsemblPlants" id="rna16591">
    <property type="protein sequence ID" value="RHN68260.1"/>
    <property type="gene ID" value="gene16591"/>
</dbReference>
<dbReference type="Gramene" id="rna16591">
    <property type="protein sequence ID" value="RHN68260.1"/>
    <property type="gene ID" value="gene16591"/>
</dbReference>
<dbReference type="HOGENOM" id="CLU_014831_4_2_1"/>
<dbReference type="OrthoDB" id="10263272at2759"/>
<dbReference type="UniPathway" id="UPA00143"/>
<dbReference type="Proteomes" id="UP000002051">
    <property type="component" value="Chromosome 3"/>
</dbReference>
<dbReference type="Proteomes" id="UP000265566">
    <property type="component" value="Chromosome 3"/>
</dbReference>
<dbReference type="GO" id="GO:0005680">
    <property type="term" value="C:anaphase-promoting complex"/>
    <property type="evidence" value="ECO:0000318"/>
    <property type="project" value="GO_Central"/>
</dbReference>
<dbReference type="GO" id="GO:0010997">
    <property type="term" value="F:anaphase-promoting complex binding"/>
    <property type="evidence" value="ECO:0000318"/>
    <property type="project" value="GO_Central"/>
</dbReference>
<dbReference type="GO" id="GO:1990757">
    <property type="term" value="F:ubiquitin ligase activator activity"/>
    <property type="evidence" value="ECO:0000318"/>
    <property type="project" value="GO_Central"/>
</dbReference>
<dbReference type="GO" id="GO:0031145">
    <property type="term" value="P:anaphase-promoting complex-dependent catabolic process"/>
    <property type="evidence" value="ECO:0000318"/>
    <property type="project" value="GO_Central"/>
</dbReference>
<dbReference type="GO" id="GO:0051301">
    <property type="term" value="P:cell division"/>
    <property type="evidence" value="ECO:0007669"/>
    <property type="project" value="UniProtKB-KW"/>
</dbReference>
<dbReference type="GO" id="GO:1905786">
    <property type="term" value="P:positive regulation of anaphase-promoting complex-dependent catabolic process"/>
    <property type="evidence" value="ECO:0000318"/>
    <property type="project" value="GO_Central"/>
</dbReference>
<dbReference type="GO" id="GO:0016567">
    <property type="term" value="P:protein ubiquitination"/>
    <property type="evidence" value="ECO:0007669"/>
    <property type="project" value="UniProtKB-UniPathway"/>
</dbReference>
<dbReference type="CDD" id="cd00200">
    <property type="entry name" value="WD40"/>
    <property type="match status" value="1"/>
</dbReference>
<dbReference type="FunFam" id="2.130.10.10:FF:000025">
    <property type="entry name" value="FIZZY-related 2 isoform 1"/>
    <property type="match status" value="1"/>
</dbReference>
<dbReference type="Gene3D" id="2.130.10.10">
    <property type="entry name" value="YVTN repeat-like/Quinoprotein amine dehydrogenase"/>
    <property type="match status" value="1"/>
</dbReference>
<dbReference type="InterPro" id="IPR033010">
    <property type="entry name" value="Cdc20/Fizzy"/>
</dbReference>
<dbReference type="InterPro" id="IPR015943">
    <property type="entry name" value="WD40/YVTN_repeat-like_dom_sf"/>
</dbReference>
<dbReference type="InterPro" id="IPR056150">
    <property type="entry name" value="WD40_CDC20-Fz"/>
</dbReference>
<dbReference type="InterPro" id="IPR019775">
    <property type="entry name" value="WD40_repeat_CS"/>
</dbReference>
<dbReference type="InterPro" id="IPR036322">
    <property type="entry name" value="WD40_repeat_dom_sf"/>
</dbReference>
<dbReference type="InterPro" id="IPR001680">
    <property type="entry name" value="WD40_rpt"/>
</dbReference>
<dbReference type="PANTHER" id="PTHR19918">
    <property type="entry name" value="CELL DIVISION CYCLE 20 CDC20 FIZZY -RELATED"/>
    <property type="match status" value="1"/>
</dbReference>
<dbReference type="PANTHER" id="PTHR19918:SF36">
    <property type="entry name" value="PROTEIN FIZZY-RELATED 3"/>
    <property type="match status" value="1"/>
</dbReference>
<dbReference type="Pfam" id="PF24807">
    <property type="entry name" value="WD40_CDC20-Fz"/>
    <property type="match status" value="1"/>
</dbReference>
<dbReference type="SMART" id="SM00320">
    <property type="entry name" value="WD40"/>
    <property type="match status" value="7"/>
</dbReference>
<dbReference type="SUPFAM" id="SSF50978">
    <property type="entry name" value="WD40 repeat-like"/>
    <property type="match status" value="1"/>
</dbReference>
<dbReference type="PROSITE" id="PS00678">
    <property type="entry name" value="WD_REPEATS_1"/>
    <property type="match status" value="2"/>
</dbReference>
<dbReference type="PROSITE" id="PS50082">
    <property type="entry name" value="WD_REPEATS_2"/>
    <property type="match status" value="3"/>
</dbReference>
<dbReference type="PROSITE" id="PS50294">
    <property type="entry name" value="WD_REPEATS_REGION"/>
    <property type="match status" value="1"/>
</dbReference>